<accession>Q0SV34</accession>
<gene>
    <name evidence="1" type="primary">aroA</name>
    <name type="ordered locus">CPR_0690</name>
</gene>
<dbReference type="EC" id="2.5.1.19" evidence="1"/>
<dbReference type="EMBL" id="CP000312">
    <property type="protein sequence ID" value="ABG85908.1"/>
    <property type="molecule type" value="Genomic_DNA"/>
</dbReference>
<dbReference type="RefSeq" id="WP_011591767.1">
    <property type="nucleotide sequence ID" value="NC_008262.1"/>
</dbReference>
<dbReference type="SMR" id="Q0SV34"/>
<dbReference type="KEGG" id="cpr:CPR_0690"/>
<dbReference type="UniPathway" id="UPA00053">
    <property type="reaction ID" value="UER00089"/>
</dbReference>
<dbReference type="Proteomes" id="UP000001824">
    <property type="component" value="Chromosome"/>
</dbReference>
<dbReference type="GO" id="GO:0005737">
    <property type="term" value="C:cytoplasm"/>
    <property type="evidence" value="ECO:0007669"/>
    <property type="project" value="UniProtKB-SubCell"/>
</dbReference>
<dbReference type="GO" id="GO:0003866">
    <property type="term" value="F:3-phosphoshikimate 1-carboxyvinyltransferase activity"/>
    <property type="evidence" value="ECO:0007669"/>
    <property type="project" value="UniProtKB-UniRule"/>
</dbReference>
<dbReference type="GO" id="GO:0008652">
    <property type="term" value="P:amino acid biosynthetic process"/>
    <property type="evidence" value="ECO:0007669"/>
    <property type="project" value="UniProtKB-KW"/>
</dbReference>
<dbReference type="GO" id="GO:0009073">
    <property type="term" value="P:aromatic amino acid family biosynthetic process"/>
    <property type="evidence" value="ECO:0007669"/>
    <property type="project" value="UniProtKB-KW"/>
</dbReference>
<dbReference type="GO" id="GO:0009423">
    <property type="term" value="P:chorismate biosynthetic process"/>
    <property type="evidence" value="ECO:0007669"/>
    <property type="project" value="UniProtKB-UniRule"/>
</dbReference>
<dbReference type="CDD" id="cd01556">
    <property type="entry name" value="EPSP_synthase"/>
    <property type="match status" value="1"/>
</dbReference>
<dbReference type="Gene3D" id="3.65.10.10">
    <property type="entry name" value="Enolpyruvate transferase domain"/>
    <property type="match status" value="2"/>
</dbReference>
<dbReference type="HAMAP" id="MF_00210">
    <property type="entry name" value="EPSP_synth"/>
    <property type="match status" value="1"/>
</dbReference>
<dbReference type="InterPro" id="IPR001986">
    <property type="entry name" value="Enolpyruvate_Tfrase_dom"/>
</dbReference>
<dbReference type="InterPro" id="IPR036968">
    <property type="entry name" value="Enolpyruvate_Tfrase_sf"/>
</dbReference>
<dbReference type="InterPro" id="IPR006264">
    <property type="entry name" value="EPSP_synthase"/>
</dbReference>
<dbReference type="InterPro" id="IPR023193">
    <property type="entry name" value="EPSP_synthase_CS"/>
</dbReference>
<dbReference type="InterPro" id="IPR013792">
    <property type="entry name" value="RNA3'P_cycl/enolpyr_Trfase_a/b"/>
</dbReference>
<dbReference type="NCBIfam" id="TIGR01356">
    <property type="entry name" value="aroA"/>
    <property type="match status" value="1"/>
</dbReference>
<dbReference type="PANTHER" id="PTHR21090">
    <property type="entry name" value="AROM/DEHYDROQUINATE SYNTHASE"/>
    <property type="match status" value="1"/>
</dbReference>
<dbReference type="PANTHER" id="PTHR21090:SF5">
    <property type="entry name" value="PENTAFUNCTIONAL AROM POLYPEPTIDE"/>
    <property type="match status" value="1"/>
</dbReference>
<dbReference type="Pfam" id="PF00275">
    <property type="entry name" value="EPSP_synthase"/>
    <property type="match status" value="1"/>
</dbReference>
<dbReference type="PIRSF" id="PIRSF000505">
    <property type="entry name" value="EPSPS"/>
    <property type="match status" value="1"/>
</dbReference>
<dbReference type="SUPFAM" id="SSF55205">
    <property type="entry name" value="EPT/RTPC-like"/>
    <property type="match status" value="1"/>
</dbReference>
<dbReference type="PROSITE" id="PS00885">
    <property type="entry name" value="EPSP_SYNTHASE_2"/>
    <property type="match status" value="1"/>
</dbReference>
<organism>
    <name type="scientific">Clostridium perfringens (strain SM101 / Type A)</name>
    <dbReference type="NCBI Taxonomy" id="289380"/>
    <lineage>
        <taxon>Bacteria</taxon>
        <taxon>Bacillati</taxon>
        <taxon>Bacillota</taxon>
        <taxon>Clostridia</taxon>
        <taxon>Eubacteriales</taxon>
        <taxon>Clostridiaceae</taxon>
        <taxon>Clostridium</taxon>
    </lineage>
</organism>
<name>AROA_CLOPS</name>
<comment type="function">
    <text evidence="1">Catalyzes the transfer of the enolpyruvyl moiety of phosphoenolpyruvate (PEP) to the 5-hydroxyl of shikimate-3-phosphate (S3P) to produce enolpyruvyl shikimate-3-phosphate and inorganic phosphate.</text>
</comment>
<comment type="catalytic activity">
    <reaction evidence="1">
        <text>3-phosphoshikimate + phosphoenolpyruvate = 5-O-(1-carboxyvinyl)-3-phosphoshikimate + phosphate</text>
        <dbReference type="Rhea" id="RHEA:21256"/>
        <dbReference type="ChEBI" id="CHEBI:43474"/>
        <dbReference type="ChEBI" id="CHEBI:57701"/>
        <dbReference type="ChEBI" id="CHEBI:58702"/>
        <dbReference type="ChEBI" id="CHEBI:145989"/>
        <dbReference type="EC" id="2.5.1.19"/>
    </reaction>
    <physiologicalReaction direction="left-to-right" evidence="1">
        <dbReference type="Rhea" id="RHEA:21257"/>
    </physiologicalReaction>
</comment>
<comment type="pathway">
    <text evidence="1">Metabolic intermediate biosynthesis; chorismate biosynthesis; chorismate from D-erythrose 4-phosphate and phosphoenolpyruvate: step 6/7.</text>
</comment>
<comment type="subunit">
    <text evidence="1">Monomer.</text>
</comment>
<comment type="subcellular location">
    <subcellularLocation>
        <location evidence="1">Cytoplasm</location>
    </subcellularLocation>
</comment>
<comment type="similarity">
    <text evidence="1">Belongs to the EPSP synthase family.</text>
</comment>
<keyword id="KW-0028">Amino-acid biosynthesis</keyword>
<keyword id="KW-0057">Aromatic amino acid biosynthesis</keyword>
<keyword id="KW-0963">Cytoplasm</keyword>
<keyword id="KW-0808">Transferase</keyword>
<evidence type="ECO:0000255" key="1">
    <source>
        <dbReference type="HAMAP-Rule" id="MF_00210"/>
    </source>
</evidence>
<feature type="chain" id="PRO_1000099692" description="3-phosphoshikimate 1-carboxyvinyltransferase">
    <location>
        <begin position="1"/>
        <end position="424"/>
    </location>
</feature>
<feature type="active site" description="Proton acceptor" evidence="1">
    <location>
        <position position="306"/>
    </location>
</feature>
<feature type="binding site" evidence="1">
    <location>
        <position position="21"/>
    </location>
    <ligand>
        <name>3-phosphoshikimate</name>
        <dbReference type="ChEBI" id="CHEBI:145989"/>
    </ligand>
</feature>
<feature type="binding site" evidence="1">
    <location>
        <position position="21"/>
    </location>
    <ligand>
        <name>phosphoenolpyruvate</name>
        <dbReference type="ChEBI" id="CHEBI:58702"/>
    </ligand>
</feature>
<feature type="binding site" evidence="1">
    <location>
        <position position="22"/>
    </location>
    <ligand>
        <name>3-phosphoshikimate</name>
        <dbReference type="ChEBI" id="CHEBI:145989"/>
    </ligand>
</feature>
<feature type="binding site" evidence="1">
    <location>
        <position position="26"/>
    </location>
    <ligand>
        <name>3-phosphoshikimate</name>
        <dbReference type="ChEBI" id="CHEBI:145989"/>
    </ligand>
</feature>
<feature type="binding site" evidence="1">
    <location>
        <position position="92"/>
    </location>
    <ligand>
        <name>phosphoenolpyruvate</name>
        <dbReference type="ChEBI" id="CHEBI:58702"/>
    </ligand>
</feature>
<feature type="binding site" evidence="1">
    <location>
        <position position="120"/>
    </location>
    <ligand>
        <name>phosphoenolpyruvate</name>
        <dbReference type="ChEBI" id="CHEBI:58702"/>
    </ligand>
</feature>
<feature type="binding site" evidence="1">
    <location>
        <position position="163"/>
    </location>
    <ligand>
        <name>3-phosphoshikimate</name>
        <dbReference type="ChEBI" id="CHEBI:145989"/>
    </ligand>
</feature>
<feature type="binding site" evidence="1">
    <location>
        <position position="164"/>
    </location>
    <ligand>
        <name>3-phosphoshikimate</name>
        <dbReference type="ChEBI" id="CHEBI:145989"/>
    </ligand>
</feature>
<feature type="binding site" evidence="1">
    <location>
        <position position="165"/>
    </location>
    <ligand>
        <name>3-phosphoshikimate</name>
        <dbReference type="ChEBI" id="CHEBI:145989"/>
    </ligand>
</feature>
<feature type="binding site" evidence="1">
    <location>
        <position position="165"/>
    </location>
    <ligand>
        <name>phosphoenolpyruvate</name>
        <dbReference type="ChEBI" id="CHEBI:58702"/>
    </ligand>
</feature>
<feature type="binding site" evidence="1">
    <location>
        <position position="191"/>
    </location>
    <ligand>
        <name>3-phosphoshikimate</name>
        <dbReference type="ChEBI" id="CHEBI:145989"/>
    </ligand>
</feature>
<feature type="binding site" evidence="1">
    <location>
        <position position="306"/>
    </location>
    <ligand>
        <name>3-phosphoshikimate</name>
        <dbReference type="ChEBI" id="CHEBI:145989"/>
    </ligand>
</feature>
<feature type="binding site" evidence="1">
    <location>
        <position position="333"/>
    </location>
    <ligand>
        <name>3-phosphoshikimate</name>
        <dbReference type="ChEBI" id="CHEBI:145989"/>
    </ligand>
</feature>
<feature type="binding site" evidence="1">
    <location>
        <position position="337"/>
    </location>
    <ligand>
        <name>phosphoenolpyruvate</name>
        <dbReference type="ChEBI" id="CHEBI:58702"/>
    </ligand>
</feature>
<feature type="binding site" evidence="1">
    <location>
        <position position="379"/>
    </location>
    <ligand>
        <name>phosphoenolpyruvate</name>
        <dbReference type="ChEBI" id="CHEBI:58702"/>
    </ligand>
</feature>
<feature type="binding site" evidence="1">
    <location>
        <position position="405"/>
    </location>
    <ligand>
        <name>phosphoenolpyruvate</name>
        <dbReference type="ChEBI" id="CHEBI:58702"/>
    </ligand>
</feature>
<protein>
    <recommendedName>
        <fullName evidence="1">3-phosphoshikimate 1-carboxyvinyltransferase</fullName>
        <ecNumber evidence="1">2.5.1.19</ecNumber>
    </recommendedName>
    <alternativeName>
        <fullName evidence="1">5-enolpyruvylshikimate-3-phosphate synthase</fullName>
        <shortName evidence="1">EPSP synthase</shortName>
        <shortName evidence="1">EPSPS</shortName>
    </alternativeName>
</protein>
<sequence length="424" mass="47137">MKKVIITPSKLRGSVKIPPSKSMAHRAIICASLSKGESVISNIDFSEDIIATMEGMKSLGANIKVEKDKLIINGENILKDSNYKVIDCNESGSTLRFLVPISLIKDNKVNFIGRGNLGKRPLKTYYEIFEEQEIKYSYEEENLDLNIEGSLKGGEFKVKGNISSQFISGLLFTLPLLKDDSKIIITTELESKGYIDLTLDMIEKFGVTIKNNNYREFLIKGNQSYKPMNYKVEGDYSQAAFYFSAGALGSEINCLDLDLSSYQGDKECIEILEGMGARLIKNQEESLSIIHGDLNGTIIDASQCPDIIPVLTVVAALSKGETSIINGERLRIKECDRLNAICTELNKLGADIKELKDGLIINGVKELIGGEVYSHKDHRIAMSLAIASTRCKEEVIIREPDCVKKSYPGFWEDFKSLSGILREE</sequence>
<proteinExistence type="inferred from homology"/>
<reference key="1">
    <citation type="journal article" date="2006" name="Genome Res.">
        <title>Skewed genomic variability in strains of the toxigenic bacterial pathogen, Clostridium perfringens.</title>
        <authorList>
            <person name="Myers G.S.A."/>
            <person name="Rasko D.A."/>
            <person name="Cheung J.K."/>
            <person name="Ravel J."/>
            <person name="Seshadri R."/>
            <person name="DeBoy R.T."/>
            <person name="Ren Q."/>
            <person name="Varga J."/>
            <person name="Awad M.M."/>
            <person name="Brinkac L.M."/>
            <person name="Daugherty S.C."/>
            <person name="Haft D.H."/>
            <person name="Dodson R.J."/>
            <person name="Madupu R."/>
            <person name="Nelson W.C."/>
            <person name="Rosovitz M.J."/>
            <person name="Sullivan S.A."/>
            <person name="Khouri H."/>
            <person name="Dimitrov G.I."/>
            <person name="Watkins K.L."/>
            <person name="Mulligan S."/>
            <person name="Benton J."/>
            <person name="Radune D."/>
            <person name="Fisher D.J."/>
            <person name="Atkins H.S."/>
            <person name="Hiscox T."/>
            <person name="Jost B.H."/>
            <person name="Billington S.J."/>
            <person name="Songer J.G."/>
            <person name="McClane B.A."/>
            <person name="Titball R.W."/>
            <person name="Rood J.I."/>
            <person name="Melville S.B."/>
            <person name="Paulsen I.T."/>
        </authorList>
    </citation>
    <scope>NUCLEOTIDE SEQUENCE [LARGE SCALE GENOMIC DNA]</scope>
    <source>
        <strain>SM101 / Type A</strain>
    </source>
</reference>